<name>APOA4_PIG</name>
<dbReference type="EMBL" id="AJ222966">
    <property type="protein sequence ID" value="CAA11020.1"/>
    <property type="molecule type" value="mRNA"/>
</dbReference>
<dbReference type="EMBL" id="EU244462">
    <property type="protein sequence ID" value="ABX11183.1"/>
    <property type="molecule type" value="mRNA"/>
</dbReference>
<dbReference type="EMBL" id="EU263979">
    <property type="protein sequence ID" value="ABY64542.1"/>
    <property type="molecule type" value="mRNA"/>
</dbReference>
<dbReference type="RefSeq" id="NP_999553.1">
    <property type="nucleotide sequence ID" value="NM_214388.1"/>
</dbReference>
<dbReference type="SMR" id="O46409"/>
<dbReference type="FunCoup" id="O46409">
    <property type="interactions" value="479"/>
</dbReference>
<dbReference type="STRING" id="9823.ENSSSCP00000057231"/>
<dbReference type="PaxDb" id="9823-ENSSSCP00000015992"/>
<dbReference type="PeptideAtlas" id="O46409"/>
<dbReference type="GeneID" id="397681"/>
<dbReference type="KEGG" id="ssc:397681"/>
<dbReference type="CTD" id="337"/>
<dbReference type="eggNOG" id="ENOG502QSC5">
    <property type="taxonomic scope" value="Eukaryota"/>
</dbReference>
<dbReference type="InParanoid" id="O46409"/>
<dbReference type="OrthoDB" id="9886755at2759"/>
<dbReference type="Proteomes" id="UP000008227">
    <property type="component" value="Unplaced"/>
</dbReference>
<dbReference type="Proteomes" id="UP000314985">
    <property type="component" value="Unplaced"/>
</dbReference>
<dbReference type="Proteomes" id="UP000694570">
    <property type="component" value="Unplaced"/>
</dbReference>
<dbReference type="Proteomes" id="UP000694571">
    <property type="component" value="Unplaced"/>
</dbReference>
<dbReference type="Proteomes" id="UP000694720">
    <property type="component" value="Unplaced"/>
</dbReference>
<dbReference type="Proteomes" id="UP000694722">
    <property type="component" value="Unplaced"/>
</dbReference>
<dbReference type="Proteomes" id="UP000694723">
    <property type="component" value="Unplaced"/>
</dbReference>
<dbReference type="Proteomes" id="UP000694724">
    <property type="component" value="Unplaced"/>
</dbReference>
<dbReference type="Proteomes" id="UP000694725">
    <property type="component" value="Unplaced"/>
</dbReference>
<dbReference type="Proteomes" id="UP000694726">
    <property type="component" value="Unplaced"/>
</dbReference>
<dbReference type="Proteomes" id="UP000694727">
    <property type="component" value="Unplaced"/>
</dbReference>
<dbReference type="Proteomes" id="UP000694728">
    <property type="component" value="Unplaced"/>
</dbReference>
<dbReference type="GO" id="GO:0042627">
    <property type="term" value="C:chylomicron"/>
    <property type="evidence" value="ECO:0000318"/>
    <property type="project" value="GO_Central"/>
</dbReference>
<dbReference type="GO" id="GO:1903561">
    <property type="term" value="C:extracellular vesicle"/>
    <property type="evidence" value="ECO:0000318"/>
    <property type="project" value="GO_Central"/>
</dbReference>
<dbReference type="GO" id="GO:0034364">
    <property type="term" value="C:high-density lipoprotein particle"/>
    <property type="evidence" value="ECO:0000318"/>
    <property type="project" value="GO_Central"/>
</dbReference>
<dbReference type="GO" id="GO:0034362">
    <property type="term" value="C:low-density lipoprotein particle"/>
    <property type="evidence" value="ECO:0000318"/>
    <property type="project" value="GO_Central"/>
</dbReference>
<dbReference type="GO" id="GO:0034361">
    <property type="term" value="C:very-low-density lipoprotein particle"/>
    <property type="evidence" value="ECO:0000318"/>
    <property type="project" value="GO_Central"/>
</dbReference>
<dbReference type="GO" id="GO:0120020">
    <property type="term" value="F:cholesterol transfer activity"/>
    <property type="evidence" value="ECO:0000318"/>
    <property type="project" value="GO_Central"/>
</dbReference>
<dbReference type="GO" id="GO:0060228">
    <property type="term" value="F:phosphatidylcholine-sterol O-acyltransferase activator activity"/>
    <property type="evidence" value="ECO:0000318"/>
    <property type="project" value="GO_Central"/>
</dbReference>
<dbReference type="GO" id="GO:0005543">
    <property type="term" value="F:phospholipid binding"/>
    <property type="evidence" value="ECO:0000318"/>
    <property type="project" value="GO_Central"/>
</dbReference>
<dbReference type="GO" id="GO:0055090">
    <property type="term" value="P:acylglycerol homeostasis"/>
    <property type="evidence" value="ECO:0000318"/>
    <property type="project" value="GO_Central"/>
</dbReference>
<dbReference type="GO" id="GO:0033344">
    <property type="term" value="P:cholesterol efflux"/>
    <property type="evidence" value="ECO:0000318"/>
    <property type="project" value="GO_Central"/>
</dbReference>
<dbReference type="GO" id="GO:0008203">
    <property type="term" value="P:cholesterol metabolic process"/>
    <property type="evidence" value="ECO:0000318"/>
    <property type="project" value="GO_Central"/>
</dbReference>
<dbReference type="GO" id="GO:0042157">
    <property type="term" value="P:lipoprotein metabolic process"/>
    <property type="evidence" value="ECO:0007669"/>
    <property type="project" value="InterPro"/>
</dbReference>
<dbReference type="GO" id="GO:0033700">
    <property type="term" value="P:phospholipid efflux"/>
    <property type="evidence" value="ECO:0000318"/>
    <property type="project" value="GO_Central"/>
</dbReference>
<dbReference type="FunFam" id="1.20.5.20:FF:000001">
    <property type="entry name" value="apolipoprotein A-I"/>
    <property type="match status" value="1"/>
</dbReference>
<dbReference type="FunFam" id="1.20.120.20:FF:000004">
    <property type="entry name" value="Apolipoprotein A-IV"/>
    <property type="match status" value="1"/>
</dbReference>
<dbReference type="FunFam" id="1.20.120.20:FF:000005">
    <property type="entry name" value="Apolipoprotein A-IV"/>
    <property type="match status" value="1"/>
</dbReference>
<dbReference type="Gene3D" id="1.20.120.20">
    <property type="entry name" value="Apolipoprotein"/>
    <property type="match status" value="2"/>
</dbReference>
<dbReference type="InterPro" id="IPR000074">
    <property type="entry name" value="ApoA_E"/>
</dbReference>
<dbReference type="InterPro" id="IPR050163">
    <property type="entry name" value="Apolipoprotein_A1/A4/E"/>
</dbReference>
<dbReference type="PANTHER" id="PTHR18976">
    <property type="entry name" value="APOLIPOPROTEIN"/>
    <property type="match status" value="1"/>
</dbReference>
<dbReference type="PANTHER" id="PTHR18976:SF1">
    <property type="entry name" value="APOLIPOPROTEIN A-IV"/>
    <property type="match status" value="1"/>
</dbReference>
<dbReference type="Pfam" id="PF01442">
    <property type="entry name" value="Apolipoprotein"/>
    <property type="match status" value="1"/>
</dbReference>
<dbReference type="SUPFAM" id="SSF58113">
    <property type="entry name" value="Apolipoprotein A-I"/>
    <property type="match status" value="2"/>
</dbReference>
<accession>O46409</accession>
<accession>A9LM22</accession>
<keyword id="KW-0162">Chylomicron</keyword>
<keyword id="KW-0345">HDL</keyword>
<keyword id="KW-0445">Lipid transport</keyword>
<keyword id="KW-1185">Reference proteome</keyword>
<keyword id="KW-0677">Repeat</keyword>
<keyword id="KW-0964">Secreted</keyword>
<keyword id="KW-0732">Signal</keyword>
<keyword id="KW-0813">Transport</keyword>
<reference key="1">
    <citation type="journal article" date="2004" name="Gene">
        <title>Cloning, characterization and comparative analysis of pig plasma apolipoprotein A-IV.</title>
        <authorList>
            <person name="Navarro M.A."/>
            <person name="Acin S."/>
            <person name="Iturralde M."/>
            <person name="Calleja L."/>
            <person name="Carnicer R."/>
            <person name="Guzman-Garcia M.A."/>
            <person name="Gonzalex-Ramon N."/>
            <person name="Mata P."/>
            <person name="Isabel B."/>
            <person name="Lopez-Bote C.J."/>
            <person name="Lampreave F."/>
            <person name="Pineiro A."/>
            <person name="Osada J."/>
        </authorList>
    </citation>
    <scope>NUCLEOTIDE SEQUENCE [MRNA]</scope>
</reference>
<reference key="2">
    <citation type="submission" date="2007-10" db="EMBL/GenBank/DDBJ databases">
        <title>Analysis of differentially expressed proteins at different growth stages in pig.</title>
        <authorList>
            <person name="Chung H.Y."/>
        </authorList>
    </citation>
    <scope>NUCLEOTIDE SEQUENCE [MRNA] OF 203-382</scope>
</reference>
<comment type="function">
    <text>May have a role in chylomicrons and VLDL secretion and catabolism. Required for efficient activation of lipoprotein lipase by ApoC-II; potent activator of LCAT. Apoa-IV is a major component of HDL and chylomicrons.</text>
</comment>
<comment type="subunit">
    <text evidence="2">Homodimer.</text>
</comment>
<comment type="subcellular location">
    <subcellularLocation>
        <location>Secreted</location>
    </subcellularLocation>
</comment>
<comment type="tissue specificity">
    <text>Secreted in plasma.</text>
</comment>
<comment type="domain">
    <text>Nine of the thirteen 22-amino acid tandem repeats (each 22-mer is actually a tandem array of two, A and B, related 11-mers) occurring in this sequence are predicted to be highly alpha-helical, and many of these helices are amphipathic. They may therefore serve as lipid-binding domains with lecithin:cholesterol acyltransferase (LCAT) activating abilities.</text>
</comment>
<comment type="similarity">
    <text evidence="4">Belongs to the apolipoprotein A1/A4/E family.</text>
</comment>
<evidence type="ECO:0000250" key="1"/>
<evidence type="ECO:0000250" key="2">
    <source>
        <dbReference type="UniProtKB" id="P06727"/>
    </source>
</evidence>
<evidence type="ECO:0000256" key="3">
    <source>
        <dbReference type="SAM" id="MobiDB-lite"/>
    </source>
</evidence>
<evidence type="ECO:0000305" key="4"/>
<gene>
    <name type="primary">APOA4</name>
</gene>
<sequence>MFLKAVVLSLALVAVTGARAEVNADQVATVMWDYFSQLGSNAKKAVEHLQKSELTQQLNTLFQDKLGEVNTYTEDLQKKLVPFATELHERLTKDSEKLKEEIRRELEELRARLLPHATEVSQKIGDNVRELQQRLGPFTGGLRTQVNTQVQQLQRQLKPYAERMESVLRQNIRNLEASVAPYADEFKAKIDQNVEELKGSLTPYAEELKAKIDQNVEELRRSLAPYAQDVQEKLNHQLEGLAFQMKKQAEELKAKISANADELRQKLVPVAENVHGHLKGNTEGLQKSLLELRSHLDQQVEEFRLKVEPYGETFNKALVQQVEDLRQKLGPLAGDVEGHLSFLEKDLRDKVNTFFSTLKEEASQGQSQALPAQEKAQAPLEG</sequence>
<proteinExistence type="evidence at transcript level"/>
<protein>
    <recommendedName>
        <fullName>Apolipoprotein A-IV</fullName>
        <shortName>Apo-AIV</shortName>
        <shortName>ApoA-IV</shortName>
    </recommendedName>
    <alternativeName>
        <fullName>Apolipoprotein A4</fullName>
    </alternativeName>
</protein>
<feature type="signal peptide" evidence="1">
    <location>
        <begin position="1"/>
        <end position="20"/>
    </location>
</feature>
<feature type="chain" id="PRO_0000001979" description="Apolipoprotein A-IV">
    <location>
        <begin position="21"/>
        <end position="382"/>
    </location>
</feature>
<feature type="repeat" description="1">
    <location>
        <begin position="33"/>
        <end position="54"/>
    </location>
</feature>
<feature type="repeat" description="2">
    <location>
        <begin position="60"/>
        <end position="81"/>
    </location>
</feature>
<feature type="repeat" description="3">
    <location>
        <begin position="82"/>
        <end position="103"/>
    </location>
</feature>
<feature type="repeat" description="4">
    <location>
        <begin position="115"/>
        <end position="136"/>
    </location>
</feature>
<feature type="repeat" description="5">
    <location>
        <begin position="137"/>
        <end position="158"/>
    </location>
</feature>
<feature type="repeat" description="6">
    <location>
        <begin position="159"/>
        <end position="180"/>
    </location>
</feature>
<feature type="repeat" description="7">
    <location>
        <begin position="181"/>
        <end position="202"/>
    </location>
</feature>
<feature type="repeat" description="8">
    <location>
        <begin position="203"/>
        <end position="224"/>
    </location>
</feature>
<feature type="repeat" description="9">
    <location>
        <begin position="225"/>
        <end position="246"/>
    </location>
</feature>
<feature type="repeat" description="10">
    <location>
        <begin position="247"/>
        <end position="268"/>
    </location>
</feature>
<feature type="repeat" description="11">
    <location>
        <begin position="269"/>
        <end position="286"/>
    </location>
</feature>
<feature type="repeat" description="12">
    <location>
        <begin position="287"/>
        <end position="308"/>
    </location>
</feature>
<feature type="repeat" description="13">
    <location>
        <begin position="309"/>
        <end position="330"/>
    </location>
</feature>
<feature type="region of interest" description="13 X 22 AA approximate tandem repeats">
    <location>
        <begin position="33"/>
        <end position="330"/>
    </location>
</feature>
<feature type="region of interest" description="Disordered" evidence="3">
    <location>
        <begin position="361"/>
        <end position="382"/>
    </location>
</feature>
<organism>
    <name type="scientific">Sus scrofa</name>
    <name type="common">Pig</name>
    <dbReference type="NCBI Taxonomy" id="9823"/>
    <lineage>
        <taxon>Eukaryota</taxon>
        <taxon>Metazoa</taxon>
        <taxon>Chordata</taxon>
        <taxon>Craniata</taxon>
        <taxon>Vertebrata</taxon>
        <taxon>Euteleostomi</taxon>
        <taxon>Mammalia</taxon>
        <taxon>Eutheria</taxon>
        <taxon>Laurasiatheria</taxon>
        <taxon>Artiodactyla</taxon>
        <taxon>Suina</taxon>
        <taxon>Suidae</taxon>
        <taxon>Sus</taxon>
    </lineage>
</organism>